<organism>
    <name type="scientific">Bradyrhizobium diazoefficiens (strain JCM 10833 / BCRC 13528 / IAM 13628 / NBRC 14792 / USDA 110)</name>
    <dbReference type="NCBI Taxonomy" id="224911"/>
    <lineage>
        <taxon>Bacteria</taxon>
        <taxon>Pseudomonadati</taxon>
        <taxon>Pseudomonadota</taxon>
        <taxon>Alphaproteobacteria</taxon>
        <taxon>Hyphomicrobiales</taxon>
        <taxon>Nitrobacteraceae</taxon>
        <taxon>Bradyrhizobium</taxon>
    </lineage>
</organism>
<protein>
    <recommendedName>
        <fullName evidence="1">Ribosome-recycling factor</fullName>
        <shortName evidence="1">RRF</shortName>
    </recommendedName>
    <alternativeName>
        <fullName evidence="1">Ribosome-releasing factor</fullName>
    </alternativeName>
</protein>
<comment type="function">
    <text evidence="1">Responsible for the release of ribosomes from messenger RNA at the termination of protein biosynthesis. May increase the efficiency of translation by recycling ribosomes from one round of translation to another.</text>
</comment>
<comment type="subcellular location">
    <subcellularLocation>
        <location evidence="1">Cytoplasm</location>
    </subcellularLocation>
</comment>
<comment type="similarity">
    <text evidence="1">Belongs to the RRF family.</text>
</comment>
<evidence type="ECO:0000255" key="1">
    <source>
        <dbReference type="HAMAP-Rule" id="MF_00040"/>
    </source>
</evidence>
<keyword id="KW-0963">Cytoplasm</keyword>
<keyword id="KW-0648">Protein biosynthesis</keyword>
<keyword id="KW-1185">Reference proteome</keyword>
<name>RRF_BRADU</name>
<proteinExistence type="inferred from homology"/>
<sequence>MMPTGNFDLNEVKRRMQGAVQSLKHELGGLRTGRASASMLDPVQVEAYGSHMPLNQLATVSVPEPRLISVQVWDKSMVKAVEKAIVDSNLGLSPATEGQVLRLRIPELNEERRKELVKVAHKYAEAAKVAARHVRRDGLDVLKKLEKNHEMSEDDQKRHADEVQKVTDGTIAEIDQLLAAKEKEILTV</sequence>
<feature type="chain" id="PRO_0000167424" description="Ribosome-recycling factor">
    <location>
        <begin position="1"/>
        <end position="188"/>
    </location>
</feature>
<accession>Q89KP6</accession>
<reference key="1">
    <citation type="journal article" date="2002" name="DNA Res.">
        <title>Complete genomic sequence of nitrogen-fixing symbiotic bacterium Bradyrhizobium japonicum USDA110.</title>
        <authorList>
            <person name="Kaneko T."/>
            <person name="Nakamura Y."/>
            <person name="Sato S."/>
            <person name="Minamisawa K."/>
            <person name="Uchiumi T."/>
            <person name="Sasamoto S."/>
            <person name="Watanabe A."/>
            <person name="Idesawa K."/>
            <person name="Iriguchi M."/>
            <person name="Kawashima K."/>
            <person name="Kohara M."/>
            <person name="Matsumoto M."/>
            <person name="Shimpo S."/>
            <person name="Tsuruoka H."/>
            <person name="Wada T."/>
            <person name="Yamada M."/>
            <person name="Tabata S."/>
        </authorList>
    </citation>
    <scope>NUCLEOTIDE SEQUENCE [LARGE SCALE GENOMIC DNA]</scope>
    <source>
        <strain>JCM 10833 / BCRC 13528 / IAM 13628 / NBRC 14792 / USDA 110</strain>
    </source>
</reference>
<dbReference type="EMBL" id="BA000040">
    <property type="protein sequence ID" value="BAC50123.1"/>
    <property type="molecule type" value="Genomic_DNA"/>
</dbReference>
<dbReference type="RefSeq" id="NP_771498.1">
    <property type="nucleotide sequence ID" value="NC_004463.1"/>
</dbReference>
<dbReference type="SMR" id="Q89KP6"/>
<dbReference type="FunCoup" id="Q89KP6">
    <property type="interactions" value="712"/>
</dbReference>
<dbReference type="STRING" id="224911.AAV28_21600"/>
<dbReference type="EnsemblBacteria" id="BAC50123">
    <property type="protein sequence ID" value="BAC50123"/>
    <property type="gene ID" value="BAC50123"/>
</dbReference>
<dbReference type="KEGG" id="bja:bll4858"/>
<dbReference type="PATRIC" id="fig|224911.5.peg.4939"/>
<dbReference type="eggNOG" id="COG0233">
    <property type="taxonomic scope" value="Bacteria"/>
</dbReference>
<dbReference type="HOGENOM" id="CLU_073981_2_0_5"/>
<dbReference type="InParanoid" id="Q89KP6"/>
<dbReference type="OrthoDB" id="9804006at2"/>
<dbReference type="PhylomeDB" id="Q89KP6"/>
<dbReference type="Proteomes" id="UP000002526">
    <property type="component" value="Chromosome"/>
</dbReference>
<dbReference type="GO" id="GO:0005737">
    <property type="term" value="C:cytoplasm"/>
    <property type="evidence" value="ECO:0000318"/>
    <property type="project" value="GO_Central"/>
</dbReference>
<dbReference type="GO" id="GO:0005829">
    <property type="term" value="C:cytosol"/>
    <property type="evidence" value="ECO:0007669"/>
    <property type="project" value="GOC"/>
</dbReference>
<dbReference type="GO" id="GO:0043023">
    <property type="term" value="F:ribosomal large subunit binding"/>
    <property type="evidence" value="ECO:0000318"/>
    <property type="project" value="GO_Central"/>
</dbReference>
<dbReference type="GO" id="GO:0002184">
    <property type="term" value="P:cytoplasmic translational termination"/>
    <property type="evidence" value="ECO:0000318"/>
    <property type="project" value="GO_Central"/>
</dbReference>
<dbReference type="GO" id="GO:0006412">
    <property type="term" value="P:translation"/>
    <property type="evidence" value="ECO:0000318"/>
    <property type="project" value="GO_Central"/>
</dbReference>
<dbReference type="CDD" id="cd00520">
    <property type="entry name" value="RRF"/>
    <property type="match status" value="1"/>
</dbReference>
<dbReference type="FunFam" id="1.10.132.20:FF:000001">
    <property type="entry name" value="Ribosome-recycling factor"/>
    <property type="match status" value="1"/>
</dbReference>
<dbReference type="FunFam" id="3.30.1360.40:FF:000001">
    <property type="entry name" value="Ribosome-recycling factor"/>
    <property type="match status" value="1"/>
</dbReference>
<dbReference type="Gene3D" id="3.30.1360.40">
    <property type="match status" value="1"/>
</dbReference>
<dbReference type="Gene3D" id="1.10.132.20">
    <property type="entry name" value="Ribosome-recycling factor"/>
    <property type="match status" value="1"/>
</dbReference>
<dbReference type="HAMAP" id="MF_00040">
    <property type="entry name" value="RRF"/>
    <property type="match status" value="1"/>
</dbReference>
<dbReference type="InterPro" id="IPR002661">
    <property type="entry name" value="Ribosome_recyc_fac"/>
</dbReference>
<dbReference type="InterPro" id="IPR023584">
    <property type="entry name" value="Ribosome_recyc_fac_dom"/>
</dbReference>
<dbReference type="InterPro" id="IPR036191">
    <property type="entry name" value="RRF_sf"/>
</dbReference>
<dbReference type="NCBIfam" id="TIGR00496">
    <property type="entry name" value="frr"/>
    <property type="match status" value="1"/>
</dbReference>
<dbReference type="PANTHER" id="PTHR20982:SF3">
    <property type="entry name" value="MITOCHONDRIAL RIBOSOME RECYCLING FACTOR PSEUDO 1"/>
    <property type="match status" value="1"/>
</dbReference>
<dbReference type="PANTHER" id="PTHR20982">
    <property type="entry name" value="RIBOSOME RECYCLING FACTOR"/>
    <property type="match status" value="1"/>
</dbReference>
<dbReference type="Pfam" id="PF01765">
    <property type="entry name" value="RRF"/>
    <property type="match status" value="1"/>
</dbReference>
<dbReference type="SUPFAM" id="SSF55194">
    <property type="entry name" value="Ribosome recycling factor, RRF"/>
    <property type="match status" value="1"/>
</dbReference>
<gene>
    <name evidence="1" type="primary">frr</name>
    <name type="synonym">rrf</name>
    <name type="ordered locus">bll4858</name>
</gene>